<protein>
    <recommendedName>
        <fullName>Replicative DNA helicase DnaB</fullName>
        <ecNumber evidence="1">5.6.2.3</ecNumber>
    </recommendedName>
    <alternativeName>
        <fullName evidence="3">DNA 5'-3' helicase DnaB</fullName>
    </alternativeName>
</protein>
<proteinExistence type="inferred from homology"/>
<evidence type="ECO:0000250" key="1">
    <source>
        <dbReference type="UniProtKB" id="O25916"/>
    </source>
</evidence>
<evidence type="ECO:0000255" key="2">
    <source>
        <dbReference type="PROSITE-ProRule" id="PRU00596"/>
    </source>
</evidence>
<evidence type="ECO:0000305" key="3"/>
<keyword id="KW-0067">ATP-binding</keyword>
<keyword id="KW-0235">DNA replication</keyword>
<keyword id="KW-0238">DNA-binding</keyword>
<keyword id="KW-0347">Helicase</keyword>
<keyword id="KW-0378">Hydrolase</keyword>
<keyword id="KW-0413">Isomerase</keyword>
<keyword id="KW-0547">Nucleotide-binding</keyword>
<keyword id="KW-0639">Primosome</keyword>
<accession>Q9ZJM5</accession>
<gene>
    <name type="primary">dnaB</name>
    <name type="ordered locus">jhp_1280</name>
</gene>
<name>DNAB_HELPJ</name>
<dbReference type="EC" id="5.6.2.3" evidence="1"/>
<dbReference type="EMBL" id="AE001439">
    <property type="protein sequence ID" value="AAD06865.1"/>
    <property type="molecule type" value="Genomic_DNA"/>
</dbReference>
<dbReference type="PIR" id="F71825">
    <property type="entry name" value="F71825"/>
</dbReference>
<dbReference type="RefSeq" id="WP_000349702.1">
    <property type="nucleotide sequence ID" value="NC_000921.1"/>
</dbReference>
<dbReference type="SMR" id="Q9ZJM5"/>
<dbReference type="KEGG" id="hpj:jhp_1280"/>
<dbReference type="PATRIC" id="fig|85963.30.peg.1288"/>
<dbReference type="eggNOG" id="COG0305">
    <property type="taxonomic scope" value="Bacteria"/>
</dbReference>
<dbReference type="Proteomes" id="UP000000804">
    <property type="component" value="Chromosome"/>
</dbReference>
<dbReference type="GO" id="GO:0005829">
    <property type="term" value="C:cytosol"/>
    <property type="evidence" value="ECO:0007669"/>
    <property type="project" value="TreeGrafter"/>
</dbReference>
<dbReference type="GO" id="GO:1990077">
    <property type="term" value="C:primosome complex"/>
    <property type="evidence" value="ECO:0007669"/>
    <property type="project" value="UniProtKB-KW"/>
</dbReference>
<dbReference type="GO" id="GO:0005524">
    <property type="term" value="F:ATP binding"/>
    <property type="evidence" value="ECO:0007669"/>
    <property type="project" value="UniProtKB-KW"/>
</dbReference>
<dbReference type="GO" id="GO:0016887">
    <property type="term" value="F:ATP hydrolysis activity"/>
    <property type="evidence" value="ECO:0007669"/>
    <property type="project" value="RHEA"/>
</dbReference>
<dbReference type="GO" id="GO:0003677">
    <property type="term" value="F:DNA binding"/>
    <property type="evidence" value="ECO:0007669"/>
    <property type="project" value="UniProtKB-KW"/>
</dbReference>
<dbReference type="GO" id="GO:0003678">
    <property type="term" value="F:DNA helicase activity"/>
    <property type="evidence" value="ECO:0007669"/>
    <property type="project" value="InterPro"/>
</dbReference>
<dbReference type="GO" id="GO:0006269">
    <property type="term" value="P:DNA replication, synthesis of primer"/>
    <property type="evidence" value="ECO:0007669"/>
    <property type="project" value="UniProtKB-KW"/>
</dbReference>
<dbReference type="CDD" id="cd00984">
    <property type="entry name" value="DnaB_C"/>
    <property type="match status" value="1"/>
</dbReference>
<dbReference type="Gene3D" id="1.10.860.10">
    <property type="entry name" value="DNAb Helicase, Chain A"/>
    <property type="match status" value="1"/>
</dbReference>
<dbReference type="Gene3D" id="3.40.50.300">
    <property type="entry name" value="P-loop containing nucleotide triphosphate hydrolases"/>
    <property type="match status" value="1"/>
</dbReference>
<dbReference type="InterPro" id="IPR036185">
    <property type="entry name" value="DNA_heli_DnaB-like_N_sf"/>
</dbReference>
<dbReference type="InterPro" id="IPR007692">
    <property type="entry name" value="DNA_helicase_DnaB"/>
</dbReference>
<dbReference type="InterPro" id="IPR007694">
    <property type="entry name" value="DNA_helicase_DnaB-like_C"/>
</dbReference>
<dbReference type="InterPro" id="IPR007693">
    <property type="entry name" value="DNA_helicase_DnaB-like_N"/>
</dbReference>
<dbReference type="InterPro" id="IPR016136">
    <property type="entry name" value="DNA_helicase_N/primase_C"/>
</dbReference>
<dbReference type="InterPro" id="IPR027417">
    <property type="entry name" value="P-loop_NTPase"/>
</dbReference>
<dbReference type="NCBIfam" id="TIGR00665">
    <property type="entry name" value="DnaB"/>
    <property type="match status" value="1"/>
</dbReference>
<dbReference type="NCBIfam" id="NF006306">
    <property type="entry name" value="PRK08506.1"/>
    <property type="match status" value="1"/>
</dbReference>
<dbReference type="PANTHER" id="PTHR30153:SF2">
    <property type="entry name" value="REPLICATIVE DNA HELICASE"/>
    <property type="match status" value="1"/>
</dbReference>
<dbReference type="PANTHER" id="PTHR30153">
    <property type="entry name" value="REPLICATIVE DNA HELICASE DNAB"/>
    <property type="match status" value="1"/>
</dbReference>
<dbReference type="Pfam" id="PF00772">
    <property type="entry name" value="DnaB"/>
    <property type="match status" value="1"/>
</dbReference>
<dbReference type="Pfam" id="PF03796">
    <property type="entry name" value="DnaB_C"/>
    <property type="match status" value="1"/>
</dbReference>
<dbReference type="SUPFAM" id="SSF48024">
    <property type="entry name" value="N-terminal domain of DnaB helicase"/>
    <property type="match status" value="1"/>
</dbReference>
<dbReference type="SUPFAM" id="SSF52540">
    <property type="entry name" value="P-loop containing nucleoside triphosphate hydrolases"/>
    <property type="match status" value="1"/>
</dbReference>
<dbReference type="PROSITE" id="PS51199">
    <property type="entry name" value="SF4_HELICASE"/>
    <property type="match status" value="1"/>
</dbReference>
<feature type="chain" id="PRO_0000102024" description="Replicative DNA helicase DnaB">
    <location>
        <begin position="1"/>
        <end position="486"/>
    </location>
</feature>
<feature type="domain" description="SF4 helicase" evidence="2">
    <location>
        <begin position="172"/>
        <end position="471"/>
    </location>
</feature>
<feature type="binding site" evidence="2">
    <location>
        <begin position="203"/>
        <end position="210"/>
    </location>
    <ligand>
        <name>ATP</name>
        <dbReference type="ChEBI" id="CHEBI:30616"/>
    </ligand>
</feature>
<comment type="function">
    <text evidence="1">The main replicative DNA helicase, it participates in initiation and elongation during chromosome replication. Travels ahead of the DNA replisome, separating dsDNA into templates for DNA synthesis. A processive ATP-dependent 5'-3' DNA helicase it has DNA-dependent ATPase activity.</text>
</comment>
<comment type="catalytic activity">
    <reaction evidence="1">
        <text>Couples ATP hydrolysis with the unwinding of duplex DNA at the replication fork by translocating in the 5'-3' direction. This creates two antiparallel DNA single strands (ssDNA). The leading ssDNA polymer is the template for DNA polymerase III holoenzyme which synthesizes a continuous strand.</text>
        <dbReference type="EC" id="5.6.2.3"/>
    </reaction>
</comment>
<comment type="catalytic activity">
    <reaction evidence="1">
        <text>ATP + H2O = ADP + phosphate + H(+)</text>
        <dbReference type="Rhea" id="RHEA:13065"/>
        <dbReference type="ChEBI" id="CHEBI:15377"/>
        <dbReference type="ChEBI" id="CHEBI:15378"/>
        <dbReference type="ChEBI" id="CHEBI:30616"/>
        <dbReference type="ChEBI" id="CHEBI:43474"/>
        <dbReference type="ChEBI" id="CHEBI:456216"/>
        <dbReference type="EC" id="5.6.2.3"/>
    </reaction>
</comment>
<comment type="subunit">
    <text evidence="1">Dodecamer.</text>
</comment>
<comment type="similarity">
    <text evidence="3">Belongs to the helicase family. DnaB subfamily.</text>
</comment>
<sequence length="486" mass="55540">MDHLKHLQQLQNIERIVLSGIVLANHKIEEIHSVLEPSDFYYPPHGLFFEIALKLHEVNCPIDENFIRQKMPKDKQISEDDLVAIFAASPIDNIEAYVEEIKNASIKRKLFTLANTIREQALESAQKSSDILNAVEREVYALLNGSTIEGFRGIKEVLESTMNLITENQRKGSLKVTGIPTGFVQLDNYTSGFNQGSLVILGARPSMGKTSLMMNMVLSALNDDRGVAVFSLEMSAEQLALRALSDLTSINMHDLESARLDDDQWENLAKCFDHLSQKKLFFYDKSYVRMDQIRLQLRKLKSQHKELGIAFIDYLQLMSGNKATKERHEQIAEISRELKTLARELEIPIIALVQLNRSLENRDDKRPILSDIKDSGGIEQDADIVLFLYRGYIYQMRAEDNKIDKLKKEGKVEEAQELHLKVNEERRIHKQNGSIEEAEIIVAKNRNGATGTVYTRFNAPFTRYEDMPVDSHLEEGQETKFEMPTT</sequence>
<reference key="1">
    <citation type="journal article" date="1999" name="Nature">
        <title>Genomic sequence comparison of two unrelated isolates of the human gastric pathogen Helicobacter pylori.</title>
        <authorList>
            <person name="Alm R.A."/>
            <person name="Ling L.-S.L."/>
            <person name="Moir D.T."/>
            <person name="King B.L."/>
            <person name="Brown E.D."/>
            <person name="Doig P.C."/>
            <person name="Smith D.R."/>
            <person name="Noonan B."/>
            <person name="Guild B.C."/>
            <person name="deJonge B.L."/>
            <person name="Carmel G."/>
            <person name="Tummino P.J."/>
            <person name="Caruso A."/>
            <person name="Uria-Nickelsen M."/>
            <person name="Mills D.M."/>
            <person name="Ives C."/>
            <person name="Gibson R."/>
            <person name="Merberg D."/>
            <person name="Mills S.D."/>
            <person name="Jiang Q."/>
            <person name="Taylor D.E."/>
            <person name="Vovis G.F."/>
            <person name="Trust T.J."/>
        </authorList>
    </citation>
    <scope>NUCLEOTIDE SEQUENCE [LARGE SCALE GENOMIC DNA]</scope>
    <source>
        <strain>J99 / ATCC 700824</strain>
    </source>
</reference>
<organism>
    <name type="scientific">Helicobacter pylori (strain J99 / ATCC 700824)</name>
    <name type="common">Campylobacter pylori J99</name>
    <dbReference type="NCBI Taxonomy" id="85963"/>
    <lineage>
        <taxon>Bacteria</taxon>
        <taxon>Pseudomonadati</taxon>
        <taxon>Campylobacterota</taxon>
        <taxon>Epsilonproteobacteria</taxon>
        <taxon>Campylobacterales</taxon>
        <taxon>Helicobacteraceae</taxon>
        <taxon>Helicobacter</taxon>
    </lineage>
</organism>